<feature type="chain" id="PRO_0000357922" description="NADH-quinone oxidoreductase subunit D">
    <location>
        <begin position="1"/>
        <end position="449"/>
    </location>
</feature>
<protein>
    <recommendedName>
        <fullName evidence="1">NADH-quinone oxidoreductase subunit D</fullName>
        <ecNumber evidence="1">7.1.1.-</ecNumber>
    </recommendedName>
    <alternativeName>
        <fullName evidence="1">NADH dehydrogenase I subunit D</fullName>
    </alternativeName>
    <alternativeName>
        <fullName evidence="1">NDH-1 subunit D</fullName>
    </alternativeName>
</protein>
<dbReference type="EC" id="7.1.1.-" evidence="1"/>
<dbReference type="EMBL" id="AM420293">
    <property type="protein sequence ID" value="CAM06063.1"/>
    <property type="molecule type" value="Genomic_DNA"/>
</dbReference>
<dbReference type="RefSeq" id="WP_011875188.1">
    <property type="nucleotide sequence ID" value="NC_009142.1"/>
</dbReference>
<dbReference type="SMR" id="A4FPT8"/>
<dbReference type="STRING" id="405948.SACE_6899"/>
<dbReference type="KEGG" id="sen:SACE_6899"/>
<dbReference type="eggNOG" id="COG0649">
    <property type="taxonomic scope" value="Bacteria"/>
</dbReference>
<dbReference type="HOGENOM" id="CLU_015134_1_2_11"/>
<dbReference type="OrthoDB" id="9801496at2"/>
<dbReference type="Proteomes" id="UP000006728">
    <property type="component" value="Chromosome"/>
</dbReference>
<dbReference type="GO" id="GO:0005886">
    <property type="term" value="C:plasma membrane"/>
    <property type="evidence" value="ECO:0007669"/>
    <property type="project" value="UniProtKB-SubCell"/>
</dbReference>
<dbReference type="GO" id="GO:0051287">
    <property type="term" value="F:NAD binding"/>
    <property type="evidence" value="ECO:0007669"/>
    <property type="project" value="InterPro"/>
</dbReference>
<dbReference type="GO" id="GO:0050136">
    <property type="term" value="F:NADH:ubiquinone reductase (non-electrogenic) activity"/>
    <property type="evidence" value="ECO:0007669"/>
    <property type="project" value="UniProtKB-UniRule"/>
</dbReference>
<dbReference type="GO" id="GO:0048038">
    <property type="term" value="F:quinone binding"/>
    <property type="evidence" value="ECO:0007669"/>
    <property type="project" value="UniProtKB-KW"/>
</dbReference>
<dbReference type="Gene3D" id="1.10.645.10">
    <property type="entry name" value="Cytochrome-c3 Hydrogenase, chain B"/>
    <property type="match status" value="1"/>
</dbReference>
<dbReference type="HAMAP" id="MF_01358">
    <property type="entry name" value="NDH1_NuoD"/>
    <property type="match status" value="1"/>
</dbReference>
<dbReference type="InterPro" id="IPR001135">
    <property type="entry name" value="NADH_Q_OxRdtase_suD"/>
</dbReference>
<dbReference type="InterPro" id="IPR014029">
    <property type="entry name" value="NADH_UbQ_OxRdtase_49kDa_CS"/>
</dbReference>
<dbReference type="InterPro" id="IPR022885">
    <property type="entry name" value="NDH1_su_D/H"/>
</dbReference>
<dbReference type="InterPro" id="IPR029014">
    <property type="entry name" value="NiFe-Hase_large"/>
</dbReference>
<dbReference type="NCBIfam" id="TIGR01962">
    <property type="entry name" value="NuoD"/>
    <property type="match status" value="1"/>
</dbReference>
<dbReference type="NCBIfam" id="NF004739">
    <property type="entry name" value="PRK06075.1"/>
    <property type="match status" value="1"/>
</dbReference>
<dbReference type="PANTHER" id="PTHR11993:SF10">
    <property type="entry name" value="NADH DEHYDROGENASE [UBIQUINONE] IRON-SULFUR PROTEIN 2, MITOCHONDRIAL"/>
    <property type="match status" value="1"/>
</dbReference>
<dbReference type="PANTHER" id="PTHR11993">
    <property type="entry name" value="NADH-UBIQUINONE OXIDOREDUCTASE 49 KDA SUBUNIT"/>
    <property type="match status" value="1"/>
</dbReference>
<dbReference type="Pfam" id="PF00346">
    <property type="entry name" value="Complex1_49kDa"/>
    <property type="match status" value="1"/>
</dbReference>
<dbReference type="SUPFAM" id="SSF56762">
    <property type="entry name" value="HydB/Nqo4-like"/>
    <property type="match status" value="1"/>
</dbReference>
<dbReference type="PROSITE" id="PS00535">
    <property type="entry name" value="COMPLEX1_49K"/>
    <property type="match status" value="1"/>
</dbReference>
<gene>
    <name evidence="1" type="primary">nuoD</name>
    <name type="ordered locus">SACE_6899</name>
</gene>
<sequence length="449" mass="49798">MSTEPLADPAAGLGDPYAASSRETTEGRVYTVTGGDWDEFIDESAGEERIVINFGPQHPSAHGVLRLVFELEGETIVKARSVIGYLHTGIEKNVEYRTWTQGVTFVTRMDYLAPLHNETAYCMAVEKLLGVEAPPRAQTFRVMLMELSRIASHLVFLATGAMEMGATTGMTFGFREREEVLHLLEYLTGLRMNHAFVRPGGVAQDLPEDYRQKVLDFIKVMDSRLPSYDKLFTGQPIWKQRLKDVGYLPLDGCMQLGVTGPVLRSAGLAWDLRKVQPYCGYEDYEFEVPTSTGADCYARYLLRLEEMHQSLKIIRQCLDKMEPGPVMVSDAKIAWPAKLTIGPDGMGNSLEHVRKIMGQSMESLIHHFKLVTEGFDVPPGQVYVPVESPRGELGYHVVSDGGTRPMRVHVREPSFVNLQALPAMVEGGLMADAIASLASLDPVMGGVDR</sequence>
<proteinExistence type="inferred from homology"/>
<name>NUOD_SACEN</name>
<accession>A4FPT8</accession>
<reference key="1">
    <citation type="journal article" date="2007" name="Nat. Biotechnol.">
        <title>Complete genome sequence of the erythromycin-producing bacterium Saccharopolyspora erythraea NRRL23338.</title>
        <authorList>
            <person name="Oliynyk M."/>
            <person name="Samborskyy M."/>
            <person name="Lester J.B."/>
            <person name="Mironenko T."/>
            <person name="Scott N."/>
            <person name="Dickens S."/>
            <person name="Haydock S.F."/>
            <person name="Leadlay P.F."/>
        </authorList>
    </citation>
    <scope>NUCLEOTIDE SEQUENCE [LARGE SCALE GENOMIC DNA]</scope>
    <source>
        <strain>ATCC 11635 / DSM 40517 / JCM 4748 / NBRC 13426 / NCIMB 8594 / NRRL 2338</strain>
    </source>
</reference>
<evidence type="ECO:0000255" key="1">
    <source>
        <dbReference type="HAMAP-Rule" id="MF_01358"/>
    </source>
</evidence>
<keyword id="KW-1003">Cell membrane</keyword>
<keyword id="KW-0472">Membrane</keyword>
<keyword id="KW-0520">NAD</keyword>
<keyword id="KW-0874">Quinone</keyword>
<keyword id="KW-1185">Reference proteome</keyword>
<keyword id="KW-1278">Translocase</keyword>
<keyword id="KW-0813">Transport</keyword>
<organism>
    <name type="scientific">Saccharopolyspora erythraea (strain ATCC 11635 / DSM 40517 / JCM 4748 / NBRC 13426 / NCIMB 8594 / NRRL 2338)</name>
    <dbReference type="NCBI Taxonomy" id="405948"/>
    <lineage>
        <taxon>Bacteria</taxon>
        <taxon>Bacillati</taxon>
        <taxon>Actinomycetota</taxon>
        <taxon>Actinomycetes</taxon>
        <taxon>Pseudonocardiales</taxon>
        <taxon>Pseudonocardiaceae</taxon>
        <taxon>Saccharopolyspora</taxon>
    </lineage>
</organism>
<comment type="function">
    <text evidence="1">NDH-1 shuttles electrons from NADH, via FMN and iron-sulfur (Fe-S) centers, to quinones in the respiratory chain. The immediate electron acceptor for the enzyme in this species is believed to be a menaquinone. Couples the redox reaction to proton translocation (for every two electrons transferred, four hydrogen ions are translocated across the cytoplasmic membrane), and thus conserves the redox energy in a proton gradient.</text>
</comment>
<comment type="catalytic activity">
    <reaction evidence="1">
        <text>a quinone + NADH + 5 H(+)(in) = a quinol + NAD(+) + 4 H(+)(out)</text>
        <dbReference type="Rhea" id="RHEA:57888"/>
        <dbReference type="ChEBI" id="CHEBI:15378"/>
        <dbReference type="ChEBI" id="CHEBI:24646"/>
        <dbReference type="ChEBI" id="CHEBI:57540"/>
        <dbReference type="ChEBI" id="CHEBI:57945"/>
        <dbReference type="ChEBI" id="CHEBI:132124"/>
    </reaction>
</comment>
<comment type="subunit">
    <text evidence="1">NDH-1 is composed of 14 different subunits. Subunits NuoB, C, D, E, F, and G constitute the peripheral sector of the complex.</text>
</comment>
<comment type="subcellular location">
    <subcellularLocation>
        <location evidence="1">Cell membrane</location>
        <topology evidence="1">Peripheral membrane protein</topology>
        <orientation evidence="1">Cytoplasmic side</orientation>
    </subcellularLocation>
</comment>
<comment type="similarity">
    <text evidence="1">Belongs to the complex I 49 kDa subunit family.</text>
</comment>